<feature type="chain" id="PRO_0000184815" description="3-methyl-2-oxobutanoate hydroxymethyltransferase">
    <location>
        <begin position="1"/>
        <end position="279"/>
    </location>
</feature>
<feature type="active site" description="Proton acceptor" evidence="1">
    <location>
        <position position="181"/>
    </location>
</feature>
<feature type="binding site" evidence="1">
    <location>
        <begin position="43"/>
        <end position="44"/>
    </location>
    <ligand>
        <name>3-methyl-2-oxobutanoate</name>
        <dbReference type="ChEBI" id="CHEBI:11851"/>
    </ligand>
</feature>
<feature type="binding site" evidence="1">
    <location>
        <position position="43"/>
    </location>
    <ligand>
        <name>Mg(2+)</name>
        <dbReference type="ChEBI" id="CHEBI:18420"/>
    </ligand>
</feature>
<feature type="binding site" evidence="1">
    <location>
        <position position="82"/>
    </location>
    <ligand>
        <name>3-methyl-2-oxobutanoate</name>
        <dbReference type="ChEBI" id="CHEBI:11851"/>
    </ligand>
</feature>
<feature type="binding site" evidence="1">
    <location>
        <position position="82"/>
    </location>
    <ligand>
        <name>Mg(2+)</name>
        <dbReference type="ChEBI" id="CHEBI:18420"/>
    </ligand>
</feature>
<feature type="binding site" evidence="1">
    <location>
        <position position="112"/>
    </location>
    <ligand>
        <name>3-methyl-2-oxobutanoate</name>
        <dbReference type="ChEBI" id="CHEBI:11851"/>
    </ligand>
</feature>
<feature type="binding site" evidence="1">
    <location>
        <position position="114"/>
    </location>
    <ligand>
        <name>Mg(2+)</name>
        <dbReference type="ChEBI" id="CHEBI:18420"/>
    </ligand>
</feature>
<evidence type="ECO:0000255" key="1">
    <source>
        <dbReference type="HAMAP-Rule" id="MF_00156"/>
    </source>
</evidence>
<gene>
    <name evidence="1" type="primary">panB</name>
    <name type="ordered locus">ABC2067</name>
</gene>
<proteinExistence type="inferred from homology"/>
<protein>
    <recommendedName>
        <fullName evidence="1">3-methyl-2-oxobutanoate hydroxymethyltransferase</fullName>
        <ecNumber evidence="1">2.1.2.11</ecNumber>
    </recommendedName>
    <alternativeName>
        <fullName evidence="1">Ketopantoate hydroxymethyltransferase</fullName>
        <shortName evidence="1">KPHMT</shortName>
    </alternativeName>
</protein>
<comment type="function">
    <text evidence="1">Catalyzes the reversible reaction in which hydroxymethyl group from 5,10-methylenetetrahydrofolate is transferred onto alpha-ketoisovalerate to form ketopantoate.</text>
</comment>
<comment type="catalytic activity">
    <reaction evidence="1">
        <text>3-methyl-2-oxobutanoate + (6R)-5,10-methylene-5,6,7,8-tetrahydrofolate + H2O = 2-dehydropantoate + (6S)-5,6,7,8-tetrahydrofolate</text>
        <dbReference type="Rhea" id="RHEA:11824"/>
        <dbReference type="ChEBI" id="CHEBI:11561"/>
        <dbReference type="ChEBI" id="CHEBI:11851"/>
        <dbReference type="ChEBI" id="CHEBI:15377"/>
        <dbReference type="ChEBI" id="CHEBI:15636"/>
        <dbReference type="ChEBI" id="CHEBI:57453"/>
        <dbReference type="EC" id="2.1.2.11"/>
    </reaction>
</comment>
<comment type="cofactor">
    <cofactor evidence="1">
        <name>Mg(2+)</name>
        <dbReference type="ChEBI" id="CHEBI:18420"/>
    </cofactor>
    <text evidence="1">Binds 1 Mg(2+) ion per subunit.</text>
</comment>
<comment type="pathway">
    <text evidence="1">Cofactor biosynthesis; (R)-pantothenate biosynthesis; (R)-pantoate from 3-methyl-2-oxobutanoate: step 1/2.</text>
</comment>
<comment type="subunit">
    <text evidence="1">Homodecamer; pentamer of dimers.</text>
</comment>
<comment type="subcellular location">
    <subcellularLocation>
        <location evidence="1">Cytoplasm</location>
    </subcellularLocation>
</comment>
<comment type="similarity">
    <text evidence="1">Belongs to the PanB family.</text>
</comment>
<name>PANB_SHOC1</name>
<dbReference type="EC" id="2.1.2.11" evidence="1"/>
<dbReference type="EMBL" id="AP006627">
    <property type="protein sequence ID" value="BAD64602.1"/>
    <property type="molecule type" value="Genomic_DNA"/>
</dbReference>
<dbReference type="RefSeq" id="WP_011246910.1">
    <property type="nucleotide sequence ID" value="NC_006582.1"/>
</dbReference>
<dbReference type="SMR" id="Q5WGA3"/>
<dbReference type="STRING" id="66692.ABC2067"/>
<dbReference type="KEGG" id="bcl:ABC2067"/>
<dbReference type="eggNOG" id="COG0413">
    <property type="taxonomic scope" value="Bacteria"/>
</dbReference>
<dbReference type="HOGENOM" id="CLU_036645_1_0_9"/>
<dbReference type="OrthoDB" id="9781789at2"/>
<dbReference type="UniPathway" id="UPA00028">
    <property type="reaction ID" value="UER00003"/>
</dbReference>
<dbReference type="Proteomes" id="UP000001168">
    <property type="component" value="Chromosome"/>
</dbReference>
<dbReference type="GO" id="GO:0005737">
    <property type="term" value="C:cytoplasm"/>
    <property type="evidence" value="ECO:0007669"/>
    <property type="project" value="UniProtKB-SubCell"/>
</dbReference>
<dbReference type="GO" id="GO:0003864">
    <property type="term" value="F:3-methyl-2-oxobutanoate hydroxymethyltransferase activity"/>
    <property type="evidence" value="ECO:0007669"/>
    <property type="project" value="UniProtKB-UniRule"/>
</dbReference>
<dbReference type="GO" id="GO:0000287">
    <property type="term" value="F:magnesium ion binding"/>
    <property type="evidence" value="ECO:0007669"/>
    <property type="project" value="TreeGrafter"/>
</dbReference>
<dbReference type="GO" id="GO:0015940">
    <property type="term" value="P:pantothenate biosynthetic process"/>
    <property type="evidence" value="ECO:0007669"/>
    <property type="project" value="UniProtKB-UniRule"/>
</dbReference>
<dbReference type="CDD" id="cd06557">
    <property type="entry name" value="KPHMT-like"/>
    <property type="match status" value="1"/>
</dbReference>
<dbReference type="FunFam" id="3.20.20.60:FF:000003">
    <property type="entry name" value="3-methyl-2-oxobutanoate hydroxymethyltransferase"/>
    <property type="match status" value="1"/>
</dbReference>
<dbReference type="Gene3D" id="3.20.20.60">
    <property type="entry name" value="Phosphoenolpyruvate-binding domains"/>
    <property type="match status" value="1"/>
</dbReference>
<dbReference type="HAMAP" id="MF_00156">
    <property type="entry name" value="PanB"/>
    <property type="match status" value="1"/>
</dbReference>
<dbReference type="InterPro" id="IPR003700">
    <property type="entry name" value="Pantoate_hydroxy_MeTrfase"/>
</dbReference>
<dbReference type="InterPro" id="IPR015813">
    <property type="entry name" value="Pyrv/PenolPyrv_kinase-like_dom"/>
</dbReference>
<dbReference type="InterPro" id="IPR040442">
    <property type="entry name" value="Pyrv_kinase-like_dom_sf"/>
</dbReference>
<dbReference type="NCBIfam" id="TIGR00222">
    <property type="entry name" value="panB"/>
    <property type="match status" value="1"/>
</dbReference>
<dbReference type="NCBIfam" id="NF001452">
    <property type="entry name" value="PRK00311.1"/>
    <property type="match status" value="1"/>
</dbReference>
<dbReference type="PANTHER" id="PTHR20881">
    <property type="entry name" value="3-METHYL-2-OXOBUTANOATE HYDROXYMETHYLTRANSFERASE"/>
    <property type="match status" value="1"/>
</dbReference>
<dbReference type="PANTHER" id="PTHR20881:SF0">
    <property type="entry name" value="3-METHYL-2-OXOBUTANOATE HYDROXYMETHYLTRANSFERASE"/>
    <property type="match status" value="1"/>
</dbReference>
<dbReference type="Pfam" id="PF02548">
    <property type="entry name" value="Pantoate_transf"/>
    <property type="match status" value="1"/>
</dbReference>
<dbReference type="PIRSF" id="PIRSF000388">
    <property type="entry name" value="Pantoate_hydroxy_MeTrfase"/>
    <property type="match status" value="1"/>
</dbReference>
<dbReference type="SUPFAM" id="SSF51621">
    <property type="entry name" value="Phosphoenolpyruvate/pyruvate domain"/>
    <property type="match status" value="1"/>
</dbReference>
<organism>
    <name type="scientific">Shouchella clausii (strain KSM-K16)</name>
    <name type="common">Alkalihalobacillus clausii</name>
    <dbReference type="NCBI Taxonomy" id="66692"/>
    <lineage>
        <taxon>Bacteria</taxon>
        <taxon>Bacillati</taxon>
        <taxon>Bacillota</taxon>
        <taxon>Bacilli</taxon>
        <taxon>Bacillales</taxon>
        <taxon>Bacillaceae</taxon>
        <taxon>Shouchella</taxon>
    </lineage>
</organism>
<keyword id="KW-0963">Cytoplasm</keyword>
<keyword id="KW-0460">Magnesium</keyword>
<keyword id="KW-0479">Metal-binding</keyword>
<keyword id="KW-0566">Pantothenate biosynthesis</keyword>
<keyword id="KW-1185">Reference proteome</keyword>
<keyword id="KW-0808">Transferase</keyword>
<accession>Q5WGA3</accession>
<sequence length="279" mass="29653">MKTTKTFKQMKRDGEPIAMLTAYDAPSARLAERAGVDMILVGDSLGMVVLGYDSTVPVSVDDMVLHTKAVKRGAPNTFVVTDMPFLTYHSSFSETAGHVRRLLQEAGADAVKLEGGTDIASTVQRLTAAGVPVVGHIGLTPQSVGVLGGYRVQGKAQEEGEQLLADAQALEQAGAFAIVVECVPKQLGALLAKEINVPIIGIGAGAETDGQVLVYHDVIGYESERVAKFVKQYTAVSPIIEEGLASYVTDVKQRAFPEEAHTYTTNDTGWLAVYGGDKK</sequence>
<reference key="1">
    <citation type="submission" date="2003-10" db="EMBL/GenBank/DDBJ databases">
        <title>The complete genome sequence of the alkaliphilic Bacillus clausii KSM-K16.</title>
        <authorList>
            <person name="Takaki Y."/>
            <person name="Kageyama Y."/>
            <person name="Shimamura S."/>
            <person name="Suzuki H."/>
            <person name="Nishi S."/>
            <person name="Hatada Y."/>
            <person name="Kawai S."/>
            <person name="Ito S."/>
            <person name="Horikoshi K."/>
        </authorList>
    </citation>
    <scope>NUCLEOTIDE SEQUENCE [LARGE SCALE GENOMIC DNA]</scope>
    <source>
        <strain>KSM-K16</strain>
    </source>
</reference>